<name>RL15_MYCBO</name>
<organism>
    <name type="scientific">Mycobacterium bovis (strain ATCC BAA-935 / AF2122/97)</name>
    <dbReference type="NCBI Taxonomy" id="233413"/>
    <lineage>
        <taxon>Bacteria</taxon>
        <taxon>Bacillati</taxon>
        <taxon>Actinomycetota</taxon>
        <taxon>Actinomycetes</taxon>
        <taxon>Mycobacteriales</taxon>
        <taxon>Mycobacteriaceae</taxon>
        <taxon>Mycobacterium</taxon>
        <taxon>Mycobacterium tuberculosis complex</taxon>
    </lineage>
</organism>
<reference key="1">
    <citation type="journal article" date="2003" name="Proc. Natl. Acad. Sci. U.S.A.">
        <title>The complete genome sequence of Mycobacterium bovis.</title>
        <authorList>
            <person name="Garnier T."/>
            <person name="Eiglmeier K."/>
            <person name="Camus J.-C."/>
            <person name="Medina N."/>
            <person name="Mansoor H."/>
            <person name="Pryor M."/>
            <person name="Duthoy S."/>
            <person name="Grondin S."/>
            <person name="Lacroix C."/>
            <person name="Monsempe C."/>
            <person name="Simon S."/>
            <person name="Harris B."/>
            <person name="Atkin R."/>
            <person name="Doggett J."/>
            <person name="Mayes R."/>
            <person name="Keating L."/>
            <person name="Wheeler P.R."/>
            <person name="Parkhill J."/>
            <person name="Barrell B.G."/>
            <person name="Cole S.T."/>
            <person name="Gordon S.V."/>
            <person name="Hewinson R.G."/>
        </authorList>
    </citation>
    <scope>NUCLEOTIDE SEQUENCE [LARGE SCALE GENOMIC DNA]</scope>
    <source>
        <strain>ATCC BAA-935 / AF2122/97</strain>
    </source>
</reference>
<reference key="2">
    <citation type="journal article" date="2017" name="Genome Announc.">
        <title>Updated reference genome sequence and annotation of Mycobacterium bovis AF2122/97.</title>
        <authorList>
            <person name="Malone K.M."/>
            <person name="Farrell D."/>
            <person name="Stuber T.P."/>
            <person name="Schubert O.T."/>
            <person name="Aebersold R."/>
            <person name="Robbe-Austerman S."/>
            <person name="Gordon S.V."/>
        </authorList>
    </citation>
    <scope>NUCLEOTIDE SEQUENCE [LARGE SCALE GENOMIC DNA]</scope>
    <scope>GENOME REANNOTATION</scope>
    <source>
        <strain>ATCC BAA-935 / AF2122/97</strain>
    </source>
</reference>
<sequence length="146" mass="15521">MTLKLHDLRPARGSKTARTRVGRGDGSKGKTAGRGTKGTRARKQVPVTFEGGQMPIHMRLPKLKGFRNRFRTEYEIVNVGDINRLFPQGGAVGVDDLVAKGAVRKNALVKVLGDGKLTAKVDVSAHKFSGSARAKITAAGGSATEL</sequence>
<proteinExistence type="inferred from homology"/>
<keyword id="KW-1185">Reference proteome</keyword>
<keyword id="KW-0687">Ribonucleoprotein</keyword>
<keyword id="KW-0689">Ribosomal protein</keyword>
<keyword id="KW-0694">RNA-binding</keyword>
<keyword id="KW-0699">rRNA-binding</keyword>
<feature type="chain" id="PRO_0000104752" description="Large ribosomal subunit protein uL15">
    <location>
        <begin position="1"/>
        <end position="146"/>
    </location>
</feature>
<feature type="region of interest" description="Disordered" evidence="2">
    <location>
        <begin position="1"/>
        <end position="41"/>
    </location>
</feature>
<feature type="compositionally biased region" description="Basic and acidic residues" evidence="2">
    <location>
        <begin position="1"/>
        <end position="10"/>
    </location>
</feature>
<evidence type="ECO:0000255" key="1">
    <source>
        <dbReference type="HAMAP-Rule" id="MF_01341"/>
    </source>
</evidence>
<evidence type="ECO:0000256" key="2">
    <source>
        <dbReference type="SAM" id="MobiDB-lite"/>
    </source>
</evidence>
<evidence type="ECO:0000305" key="3"/>
<protein>
    <recommendedName>
        <fullName evidence="1">Large ribosomal subunit protein uL15</fullName>
    </recommendedName>
    <alternativeName>
        <fullName evidence="3">50S ribosomal protein L15</fullName>
    </alternativeName>
</protein>
<accession>Q7U1E9</accession>
<accession>A0A1R3XX77</accession>
<accession>X2BFY2</accession>
<comment type="function">
    <text evidence="1">Binds to the 23S rRNA.</text>
</comment>
<comment type="subunit">
    <text evidence="1">Part of the 50S ribosomal subunit.</text>
</comment>
<comment type="similarity">
    <text evidence="1">Belongs to the universal ribosomal protein uL15 family.</text>
</comment>
<gene>
    <name evidence="1" type="primary">rplO</name>
    <name type="ordered locus">BQ2027_MB0744</name>
</gene>
<dbReference type="EMBL" id="LT708304">
    <property type="protein sequence ID" value="SIT99343.1"/>
    <property type="molecule type" value="Genomic_DNA"/>
</dbReference>
<dbReference type="RefSeq" id="NP_854402.1">
    <property type="nucleotide sequence ID" value="NC_002945.3"/>
</dbReference>
<dbReference type="RefSeq" id="WP_003403685.1">
    <property type="nucleotide sequence ID" value="NC_002945.4"/>
</dbReference>
<dbReference type="SMR" id="Q7U1E9"/>
<dbReference type="KEGG" id="mbo:BQ2027_MB0744"/>
<dbReference type="PATRIC" id="fig|233413.5.peg.811"/>
<dbReference type="Proteomes" id="UP000001419">
    <property type="component" value="Chromosome"/>
</dbReference>
<dbReference type="GO" id="GO:0022625">
    <property type="term" value="C:cytosolic large ribosomal subunit"/>
    <property type="evidence" value="ECO:0007669"/>
    <property type="project" value="TreeGrafter"/>
</dbReference>
<dbReference type="GO" id="GO:0019843">
    <property type="term" value="F:rRNA binding"/>
    <property type="evidence" value="ECO:0007669"/>
    <property type="project" value="UniProtKB-UniRule"/>
</dbReference>
<dbReference type="GO" id="GO:0003735">
    <property type="term" value="F:structural constituent of ribosome"/>
    <property type="evidence" value="ECO:0007669"/>
    <property type="project" value="InterPro"/>
</dbReference>
<dbReference type="GO" id="GO:0006412">
    <property type="term" value="P:translation"/>
    <property type="evidence" value="ECO:0007669"/>
    <property type="project" value="UniProtKB-UniRule"/>
</dbReference>
<dbReference type="FunFam" id="3.100.10.10:FF:000005">
    <property type="entry name" value="50S ribosomal protein L15"/>
    <property type="match status" value="1"/>
</dbReference>
<dbReference type="Gene3D" id="3.100.10.10">
    <property type="match status" value="1"/>
</dbReference>
<dbReference type="HAMAP" id="MF_01341">
    <property type="entry name" value="Ribosomal_uL15"/>
    <property type="match status" value="1"/>
</dbReference>
<dbReference type="InterPro" id="IPR030878">
    <property type="entry name" value="Ribosomal_uL15"/>
</dbReference>
<dbReference type="InterPro" id="IPR021131">
    <property type="entry name" value="Ribosomal_uL15/eL18"/>
</dbReference>
<dbReference type="InterPro" id="IPR036227">
    <property type="entry name" value="Ribosomal_uL15/eL18_sf"/>
</dbReference>
<dbReference type="InterPro" id="IPR005749">
    <property type="entry name" value="Ribosomal_uL15_bac-type"/>
</dbReference>
<dbReference type="InterPro" id="IPR001196">
    <property type="entry name" value="Ribosomal_uL15_CS"/>
</dbReference>
<dbReference type="NCBIfam" id="TIGR01071">
    <property type="entry name" value="rplO_bact"/>
    <property type="match status" value="1"/>
</dbReference>
<dbReference type="PANTHER" id="PTHR12934">
    <property type="entry name" value="50S RIBOSOMAL PROTEIN L15"/>
    <property type="match status" value="1"/>
</dbReference>
<dbReference type="PANTHER" id="PTHR12934:SF11">
    <property type="entry name" value="LARGE RIBOSOMAL SUBUNIT PROTEIN UL15M"/>
    <property type="match status" value="1"/>
</dbReference>
<dbReference type="Pfam" id="PF00828">
    <property type="entry name" value="Ribosomal_L27A"/>
    <property type="match status" value="1"/>
</dbReference>
<dbReference type="SUPFAM" id="SSF52080">
    <property type="entry name" value="Ribosomal proteins L15p and L18e"/>
    <property type="match status" value="1"/>
</dbReference>
<dbReference type="PROSITE" id="PS00475">
    <property type="entry name" value="RIBOSOMAL_L15"/>
    <property type="match status" value="1"/>
</dbReference>